<comment type="function">
    <text evidence="1">Thiolesterase that catalyzes the hydrolysis of S-D-lactoyl-glutathione to form glutathione and D-lactic acid.</text>
</comment>
<comment type="catalytic activity">
    <reaction evidence="1">
        <text>an S-(2-hydroxyacyl)glutathione + H2O = a 2-hydroxy carboxylate + glutathione + H(+)</text>
        <dbReference type="Rhea" id="RHEA:21864"/>
        <dbReference type="ChEBI" id="CHEBI:15377"/>
        <dbReference type="ChEBI" id="CHEBI:15378"/>
        <dbReference type="ChEBI" id="CHEBI:57925"/>
        <dbReference type="ChEBI" id="CHEBI:58896"/>
        <dbReference type="ChEBI" id="CHEBI:71261"/>
        <dbReference type="EC" id="3.1.2.6"/>
    </reaction>
</comment>
<comment type="cofactor">
    <cofactor evidence="1">
        <name>Zn(2+)</name>
        <dbReference type="ChEBI" id="CHEBI:29105"/>
    </cofactor>
    <text evidence="1">Binds 2 Zn(2+) ions per subunit.</text>
</comment>
<comment type="pathway">
    <text evidence="1">Secondary metabolite metabolism; methylglyoxal degradation; (R)-lactate from methylglyoxal: step 2/2.</text>
</comment>
<comment type="subunit">
    <text evidence="1">Monomer.</text>
</comment>
<comment type="similarity">
    <text evidence="1">Belongs to the metallo-beta-lactamase superfamily. Glyoxalase II family.</text>
</comment>
<organism>
    <name type="scientific">Bradyrhizobium sp. (strain ORS 278)</name>
    <dbReference type="NCBI Taxonomy" id="114615"/>
    <lineage>
        <taxon>Bacteria</taxon>
        <taxon>Pseudomonadati</taxon>
        <taxon>Pseudomonadota</taxon>
        <taxon>Alphaproteobacteria</taxon>
        <taxon>Hyphomicrobiales</taxon>
        <taxon>Nitrobacteraceae</taxon>
        <taxon>Bradyrhizobium</taxon>
    </lineage>
</organism>
<accession>A4YKS8</accession>
<evidence type="ECO:0000255" key="1">
    <source>
        <dbReference type="HAMAP-Rule" id="MF_01374"/>
    </source>
</evidence>
<keyword id="KW-0378">Hydrolase</keyword>
<keyword id="KW-0479">Metal-binding</keyword>
<keyword id="KW-1185">Reference proteome</keyword>
<keyword id="KW-0862">Zinc</keyword>
<protein>
    <recommendedName>
        <fullName evidence="1">Hydroxyacylglutathione hydrolase</fullName>
        <ecNumber evidence="1">3.1.2.6</ecNumber>
    </recommendedName>
    <alternativeName>
        <fullName evidence="1">Glyoxalase II</fullName>
        <shortName evidence="1">Glx II</shortName>
    </alternativeName>
</protein>
<feature type="chain" id="PRO_0000309630" description="Hydroxyacylglutathione hydrolase">
    <location>
        <begin position="1"/>
        <end position="255"/>
    </location>
</feature>
<feature type="binding site" evidence="1">
    <location>
        <position position="56"/>
    </location>
    <ligand>
        <name>Zn(2+)</name>
        <dbReference type="ChEBI" id="CHEBI:29105"/>
        <label>1</label>
    </ligand>
</feature>
<feature type="binding site" evidence="1">
    <location>
        <position position="58"/>
    </location>
    <ligand>
        <name>Zn(2+)</name>
        <dbReference type="ChEBI" id="CHEBI:29105"/>
        <label>1</label>
    </ligand>
</feature>
<feature type="binding site" evidence="1">
    <location>
        <position position="60"/>
    </location>
    <ligand>
        <name>Zn(2+)</name>
        <dbReference type="ChEBI" id="CHEBI:29105"/>
        <label>2</label>
    </ligand>
</feature>
<feature type="binding site" evidence="1">
    <location>
        <position position="61"/>
    </location>
    <ligand>
        <name>Zn(2+)</name>
        <dbReference type="ChEBI" id="CHEBI:29105"/>
        <label>2</label>
    </ligand>
</feature>
<feature type="binding site" evidence="1">
    <location>
        <position position="114"/>
    </location>
    <ligand>
        <name>Zn(2+)</name>
        <dbReference type="ChEBI" id="CHEBI:29105"/>
        <label>1</label>
    </ligand>
</feature>
<feature type="binding site" evidence="1">
    <location>
        <position position="133"/>
    </location>
    <ligand>
        <name>Zn(2+)</name>
        <dbReference type="ChEBI" id="CHEBI:29105"/>
        <label>1</label>
    </ligand>
</feature>
<feature type="binding site" evidence="1">
    <location>
        <position position="133"/>
    </location>
    <ligand>
        <name>Zn(2+)</name>
        <dbReference type="ChEBI" id="CHEBI:29105"/>
        <label>2</label>
    </ligand>
</feature>
<feature type="binding site" evidence="1">
    <location>
        <position position="171"/>
    </location>
    <ligand>
        <name>Zn(2+)</name>
        <dbReference type="ChEBI" id="CHEBI:29105"/>
        <label>2</label>
    </ligand>
</feature>
<proteinExistence type="inferred from homology"/>
<dbReference type="EC" id="3.1.2.6" evidence="1"/>
<dbReference type="EMBL" id="CU234118">
    <property type="protein sequence ID" value="CAL74504.1"/>
    <property type="molecule type" value="Genomic_DNA"/>
</dbReference>
<dbReference type="RefSeq" id="WP_011923774.1">
    <property type="nucleotide sequence ID" value="NC_009445.1"/>
</dbReference>
<dbReference type="SMR" id="A4YKS8"/>
<dbReference type="STRING" id="114615.BRADO0567"/>
<dbReference type="KEGG" id="bra:BRADO0567"/>
<dbReference type="eggNOG" id="COG0491">
    <property type="taxonomic scope" value="Bacteria"/>
</dbReference>
<dbReference type="HOGENOM" id="CLU_030571_4_1_5"/>
<dbReference type="OrthoDB" id="9802248at2"/>
<dbReference type="UniPathway" id="UPA00619">
    <property type="reaction ID" value="UER00676"/>
</dbReference>
<dbReference type="Proteomes" id="UP000001994">
    <property type="component" value="Chromosome"/>
</dbReference>
<dbReference type="GO" id="GO:0004416">
    <property type="term" value="F:hydroxyacylglutathione hydrolase activity"/>
    <property type="evidence" value="ECO:0007669"/>
    <property type="project" value="UniProtKB-UniRule"/>
</dbReference>
<dbReference type="GO" id="GO:0046872">
    <property type="term" value="F:metal ion binding"/>
    <property type="evidence" value="ECO:0007669"/>
    <property type="project" value="UniProtKB-KW"/>
</dbReference>
<dbReference type="GO" id="GO:0019243">
    <property type="term" value="P:methylglyoxal catabolic process to D-lactate via S-lactoyl-glutathione"/>
    <property type="evidence" value="ECO:0007669"/>
    <property type="project" value="InterPro"/>
</dbReference>
<dbReference type="CDD" id="cd07723">
    <property type="entry name" value="hydroxyacylglutathione_hydrolase_MBL-fold"/>
    <property type="match status" value="1"/>
</dbReference>
<dbReference type="Gene3D" id="3.60.15.10">
    <property type="entry name" value="Ribonuclease Z/Hydroxyacylglutathione hydrolase-like"/>
    <property type="match status" value="1"/>
</dbReference>
<dbReference type="HAMAP" id="MF_01374">
    <property type="entry name" value="Glyoxalase_2"/>
    <property type="match status" value="1"/>
</dbReference>
<dbReference type="InterPro" id="IPR035680">
    <property type="entry name" value="Clx_II_MBL"/>
</dbReference>
<dbReference type="InterPro" id="IPR050110">
    <property type="entry name" value="Glyoxalase_II_hydrolase"/>
</dbReference>
<dbReference type="InterPro" id="IPR032282">
    <property type="entry name" value="HAGH_C"/>
</dbReference>
<dbReference type="InterPro" id="IPR017782">
    <property type="entry name" value="Hydroxyacylglutathione_Hdrlase"/>
</dbReference>
<dbReference type="InterPro" id="IPR001279">
    <property type="entry name" value="Metallo-B-lactamas"/>
</dbReference>
<dbReference type="InterPro" id="IPR036866">
    <property type="entry name" value="RibonucZ/Hydroxyglut_hydro"/>
</dbReference>
<dbReference type="NCBIfam" id="TIGR03413">
    <property type="entry name" value="GSH_gloB"/>
    <property type="match status" value="1"/>
</dbReference>
<dbReference type="PANTHER" id="PTHR43705">
    <property type="entry name" value="HYDROXYACYLGLUTATHIONE HYDROLASE"/>
    <property type="match status" value="1"/>
</dbReference>
<dbReference type="PANTHER" id="PTHR43705:SF1">
    <property type="entry name" value="HYDROXYACYLGLUTATHIONE HYDROLASE GLOB"/>
    <property type="match status" value="1"/>
</dbReference>
<dbReference type="Pfam" id="PF16123">
    <property type="entry name" value="HAGH_C"/>
    <property type="match status" value="1"/>
</dbReference>
<dbReference type="Pfam" id="PF00753">
    <property type="entry name" value="Lactamase_B"/>
    <property type="match status" value="1"/>
</dbReference>
<dbReference type="PIRSF" id="PIRSF005457">
    <property type="entry name" value="Glx"/>
    <property type="match status" value="1"/>
</dbReference>
<dbReference type="SMART" id="SM00849">
    <property type="entry name" value="Lactamase_B"/>
    <property type="match status" value="1"/>
</dbReference>
<dbReference type="SUPFAM" id="SSF56281">
    <property type="entry name" value="Metallo-hydrolase/oxidoreductase"/>
    <property type="match status" value="1"/>
</dbReference>
<reference key="1">
    <citation type="journal article" date="2007" name="Science">
        <title>Legumes symbioses: absence of nod genes in photosynthetic bradyrhizobia.</title>
        <authorList>
            <person name="Giraud E."/>
            <person name="Moulin L."/>
            <person name="Vallenet D."/>
            <person name="Barbe V."/>
            <person name="Cytryn E."/>
            <person name="Avarre J.-C."/>
            <person name="Jaubert M."/>
            <person name="Simon D."/>
            <person name="Cartieaux F."/>
            <person name="Prin Y."/>
            <person name="Bena G."/>
            <person name="Hannibal L."/>
            <person name="Fardoux J."/>
            <person name="Kojadinovic M."/>
            <person name="Vuillet L."/>
            <person name="Lajus A."/>
            <person name="Cruveiller S."/>
            <person name="Rouy Z."/>
            <person name="Mangenot S."/>
            <person name="Segurens B."/>
            <person name="Dossat C."/>
            <person name="Franck W.L."/>
            <person name="Chang W.-S."/>
            <person name="Saunders E."/>
            <person name="Bruce D."/>
            <person name="Richardson P."/>
            <person name="Normand P."/>
            <person name="Dreyfus B."/>
            <person name="Pignol D."/>
            <person name="Stacey G."/>
            <person name="Emerich D."/>
            <person name="Vermeglio A."/>
            <person name="Medigue C."/>
            <person name="Sadowsky M."/>
        </authorList>
    </citation>
    <scope>NUCLEOTIDE SEQUENCE [LARGE SCALE GENOMIC DNA]</scope>
    <source>
        <strain>ORS 278</strain>
    </source>
</reference>
<name>GLO2_BRASO</name>
<sequence>MAADIRVFTCLSDNFGYLIHDPATGATASVDAPEAGPIVRQLEANGWTLTDILITHHHYDHVGGVAELKQRYGCRVIGPHDRKAAIADVDLRVAHGDVVKVGELLARVLETPGHTLDHVSYVFDADKAVFAADTLFSIGCGRVFEGTYPMMWDSLLKLRTLPDDFRLYCGHEYTASNVKFALTVDPDNEALKARAAEVTRLRAANQPTIPVLLGEEKQANVFLRADDPAIAVRLRMKGASAEEVFGELRERKNKS</sequence>
<gene>
    <name evidence="1" type="primary">gloB</name>
    <name type="ordered locus">BRADO0567</name>
</gene>